<gene>
    <name type="ordered locus">SCO1206</name>
</gene>
<reference key="1">
    <citation type="journal article" date="2002" name="Nature">
        <title>Complete genome sequence of the model actinomycete Streptomyces coelicolor A3(2).</title>
        <authorList>
            <person name="Bentley S.D."/>
            <person name="Chater K.F."/>
            <person name="Cerdeno-Tarraga A.-M."/>
            <person name="Challis G.L."/>
            <person name="Thomson N.R."/>
            <person name="James K.D."/>
            <person name="Harris D.E."/>
            <person name="Quail M.A."/>
            <person name="Kieser H."/>
            <person name="Harper D."/>
            <person name="Bateman A."/>
            <person name="Brown S."/>
            <person name="Chandra G."/>
            <person name="Chen C.W."/>
            <person name="Collins M."/>
            <person name="Cronin A."/>
            <person name="Fraser A."/>
            <person name="Goble A."/>
            <person name="Hidalgo J."/>
            <person name="Hornsby T."/>
            <person name="Howarth S."/>
            <person name="Huang C.-H."/>
            <person name="Kieser T."/>
            <person name="Larke L."/>
            <person name="Murphy L.D."/>
            <person name="Oliver K."/>
            <person name="O'Neil S."/>
            <person name="Rabbinowitsch E."/>
            <person name="Rajandream M.A."/>
            <person name="Rutherford K.M."/>
            <person name="Rutter S."/>
            <person name="Seeger K."/>
            <person name="Saunders D."/>
            <person name="Sharp S."/>
            <person name="Squares R."/>
            <person name="Squares S."/>
            <person name="Taylor K."/>
            <person name="Warren T."/>
            <person name="Wietzorrek A."/>
            <person name="Woodward J.R."/>
            <person name="Barrell B.G."/>
            <person name="Parkhill J."/>
            <person name="Hopwood D.A."/>
        </authorList>
    </citation>
    <scope>NUCLEOTIDE SEQUENCE [LARGE SCALE GENOMIC DNA]</scope>
    <source>
        <strain>ATCC BAA-471 / A3(2) / M145</strain>
    </source>
</reference>
<reference key="2">
    <citation type="journal article" date="2003" name="J. Ind. Microbiol. Biotechnol.">
        <title>Expression and characterization of the type III polyketide synthase 1,3,6,8-tetrahydroxynaphthalene synthase from Streptomyces coelicolor A3(2).</title>
        <authorList>
            <person name="Izumikawa M."/>
            <person name="Shipley P.R."/>
            <person name="Hopke J.N."/>
            <person name="O'Hare T."/>
            <person name="Xiang L."/>
            <person name="Noel J.P."/>
            <person name="Moore B.S."/>
        </authorList>
    </citation>
    <scope>FUNCTION</scope>
    <scope>CATALYTIC ACTIVITY</scope>
    <scope>BIOPHYSICOCHEMICAL PROPERTIES</scope>
    <source>
        <strain>ATCC BAA-471 / A3(2) / M145</strain>
    </source>
</reference>
<reference key="3">
    <citation type="journal article" date="2004" name="J. Biol. Chem.">
        <title>Crystal structure of a bacterial type III polyketide synthase and enzymatic control of reactive polyketide intermediates.</title>
        <authorList>
            <person name="Austin M.B."/>
            <person name="Izumikawa M."/>
            <person name="Bowman M.E."/>
            <person name="Udwary D.W."/>
            <person name="Ferrer J.L."/>
            <person name="Moore B.S."/>
            <person name="Noel J.P."/>
        </authorList>
    </citation>
    <scope>X-RAY CRYSTALLOGRAPHY (2.22 ANGSTROMS)</scope>
    <scope>FUNCTION</scope>
    <scope>CATALYTIC ACTIVITY</scope>
    <scope>MUTAGENESIS OF CYS-106; CYS-168; CYS-171 AND CYS-184</scope>
    <scope>SUBUNIT</scope>
</reference>
<accession>Q9FCA7</accession>
<proteinExistence type="evidence at protein level"/>
<evidence type="ECO:0000250" key="1">
    <source>
        <dbReference type="UniProtKB" id="Q54240"/>
    </source>
</evidence>
<evidence type="ECO:0000269" key="2">
    <source>
    </source>
</evidence>
<evidence type="ECO:0000269" key="3">
    <source>
    </source>
</evidence>
<evidence type="ECO:0000303" key="4">
    <source>
    </source>
</evidence>
<evidence type="ECO:0000305" key="5"/>
<evidence type="ECO:0007829" key="6">
    <source>
        <dbReference type="PDB" id="1U0M"/>
    </source>
</evidence>
<sequence length="374" mass="40934">MATLCRPSVSVPEHVITMEETLELARRRHTDHPQLPLALRLIENTGVRTRHIVQPIEDTLEHPGFEDRNKVYEREAKSRVPAVIQRALDDAELLATDIDVIIYVSCTGFMMPSLTAWLINEMGFDSTTRQIPIAQLGCAAGGAAINRAHDFCTAYPEANALIVACEFCSLCYQPTDLGVGSLLCNGLFGDGIAAAVVRGRGGTGVRLERNGSYLIPKTEDWIMYDVKATGFHFLLDKRVPATMEPLAPALKELAGEHGWDASDLDFYIVHAGGPRILDDLSTFLEVDPHAFRFSRATLTEYGNIASAVVLDALRRLFDEGGVEEGARGLLAGFGPGITAEMSLGCWQTADVRRGIRQDVTRTAARGVSRRVRQA</sequence>
<feature type="chain" id="PRO_0000430880" description="1,3,6,8-tetrahydroxynaphthalene synthase">
    <location>
        <begin position="1"/>
        <end position="374"/>
    </location>
</feature>
<feature type="active site" evidence="1">
    <location>
        <position position="138"/>
    </location>
</feature>
<feature type="mutagenesis site" description="Still able to produce THN." evidence="3">
    <original>C</original>
    <variation>S</variation>
    <location>
        <position position="106"/>
    </location>
</feature>
<feature type="mutagenesis site" description="Still able to produce THN." evidence="3">
    <original>C</original>
    <variation>S</variation>
    <location>
        <position position="168"/>
    </location>
</feature>
<feature type="mutagenesis site" description="Still able to produce THN." evidence="3">
    <original>C</original>
    <variation>S</variation>
    <location>
        <position position="171"/>
    </location>
</feature>
<feature type="mutagenesis site" description="Still able to produce THN." evidence="3">
    <original>C</original>
    <variation>S</variation>
    <location>
        <position position="184"/>
    </location>
</feature>
<feature type="strand" evidence="6">
    <location>
        <begin position="8"/>
        <end position="10"/>
    </location>
</feature>
<feature type="strand" evidence="6">
    <location>
        <begin position="13"/>
        <end position="17"/>
    </location>
</feature>
<feature type="helix" evidence="6">
    <location>
        <begin position="18"/>
        <end position="29"/>
    </location>
</feature>
<feature type="helix" evidence="6">
    <location>
        <begin position="35"/>
        <end position="44"/>
    </location>
</feature>
<feature type="strand" evidence="6">
    <location>
        <begin position="49"/>
        <end position="54"/>
    </location>
</feature>
<feature type="helix" evidence="6">
    <location>
        <begin position="56"/>
        <end position="59"/>
    </location>
</feature>
<feature type="helix" evidence="6">
    <location>
        <begin position="65"/>
        <end position="91"/>
    </location>
</feature>
<feature type="helix" evidence="6">
    <location>
        <begin position="95"/>
        <end position="97"/>
    </location>
</feature>
<feature type="strand" evidence="6">
    <location>
        <begin position="99"/>
        <end position="104"/>
    </location>
</feature>
<feature type="strand" evidence="6">
    <location>
        <begin position="106"/>
        <end position="108"/>
    </location>
</feature>
<feature type="helix" evidence="6">
    <location>
        <begin position="114"/>
        <end position="121"/>
    </location>
</feature>
<feature type="strand" evidence="6">
    <location>
        <begin position="129"/>
        <end position="133"/>
    </location>
</feature>
<feature type="helix" evidence="6">
    <location>
        <begin position="137"/>
        <end position="139"/>
    </location>
</feature>
<feature type="helix" evidence="6">
    <location>
        <begin position="140"/>
        <end position="154"/>
    </location>
</feature>
<feature type="strand" evidence="6">
    <location>
        <begin position="159"/>
        <end position="167"/>
    </location>
</feature>
<feature type="helix" evidence="6">
    <location>
        <begin position="168"/>
        <end position="171"/>
    </location>
</feature>
<feature type="helix" evidence="6">
    <location>
        <begin position="179"/>
        <end position="187"/>
    </location>
</feature>
<feature type="strand" evidence="6">
    <location>
        <begin position="190"/>
        <end position="198"/>
    </location>
</feature>
<feature type="turn" evidence="6">
    <location>
        <begin position="199"/>
        <end position="201"/>
    </location>
</feature>
<feature type="strand" evidence="6">
    <location>
        <begin position="203"/>
        <end position="214"/>
    </location>
</feature>
<feature type="turn" evidence="6">
    <location>
        <begin position="219"/>
        <end position="221"/>
    </location>
</feature>
<feature type="strand" evidence="6">
    <location>
        <begin position="222"/>
        <end position="227"/>
    </location>
</feature>
<feature type="strand" evidence="6">
    <location>
        <begin position="230"/>
        <end position="235"/>
    </location>
</feature>
<feature type="turn" evidence="6">
    <location>
        <begin position="237"/>
        <end position="239"/>
    </location>
</feature>
<feature type="helix" evidence="6">
    <location>
        <begin position="240"/>
        <end position="242"/>
    </location>
</feature>
<feature type="helix" evidence="6">
    <location>
        <begin position="243"/>
        <end position="255"/>
    </location>
</feature>
<feature type="strand" evidence="6">
    <location>
        <begin position="268"/>
        <end position="270"/>
    </location>
</feature>
<feature type="helix" evidence="6">
    <location>
        <begin position="273"/>
        <end position="283"/>
    </location>
</feature>
<feature type="helix" evidence="6">
    <location>
        <begin position="288"/>
        <end position="291"/>
    </location>
</feature>
<feature type="helix" evidence="6">
    <location>
        <begin position="292"/>
        <end position="300"/>
    </location>
</feature>
<feature type="helix" evidence="6">
    <location>
        <begin position="307"/>
        <end position="318"/>
    </location>
</feature>
<feature type="strand" evidence="6">
    <location>
        <begin position="329"/>
        <end position="334"/>
    </location>
</feature>
<feature type="turn" evidence="6">
    <location>
        <begin position="335"/>
        <end position="337"/>
    </location>
</feature>
<feature type="strand" evidence="6">
    <location>
        <begin position="338"/>
        <end position="347"/>
    </location>
</feature>
<dbReference type="EC" id="2.3.1.233" evidence="2 3"/>
<dbReference type="EMBL" id="AL939108">
    <property type="protein sequence ID" value="CAC01488.1"/>
    <property type="molecule type" value="Genomic_DNA"/>
</dbReference>
<dbReference type="RefSeq" id="NP_625495.1">
    <property type="nucleotide sequence ID" value="NC_003888.3"/>
</dbReference>
<dbReference type="PDB" id="1U0M">
    <property type="method" value="X-ray"/>
    <property type="resolution" value="2.22 A"/>
    <property type="chains" value="A/B=1-374"/>
</dbReference>
<dbReference type="PDBsum" id="1U0M"/>
<dbReference type="SMR" id="Q9FCA7"/>
<dbReference type="STRING" id="100226.gene:17758789"/>
<dbReference type="PaxDb" id="100226-SCO1206"/>
<dbReference type="KEGG" id="sco:SCO1206"/>
<dbReference type="PATRIC" id="fig|100226.15.peg.1205"/>
<dbReference type="eggNOG" id="COG3424">
    <property type="taxonomic scope" value="Bacteria"/>
</dbReference>
<dbReference type="HOGENOM" id="CLU_034992_0_0_11"/>
<dbReference type="InParanoid" id="Q9FCA7"/>
<dbReference type="OrthoDB" id="9786288at2"/>
<dbReference type="PhylomeDB" id="Q9FCA7"/>
<dbReference type="BioCyc" id="MetaCyc:MONOMER-14457"/>
<dbReference type="BRENDA" id="2.3.1.233">
    <property type="organism ID" value="5998"/>
</dbReference>
<dbReference type="UniPathway" id="UPA00785"/>
<dbReference type="EvolutionaryTrace" id="Q9FCA7"/>
<dbReference type="Proteomes" id="UP000001973">
    <property type="component" value="Chromosome"/>
</dbReference>
<dbReference type="GO" id="GO:0016747">
    <property type="term" value="F:acyltransferase activity, transferring groups other than amino-acyl groups"/>
    <property type="evidence" value="ECO:0000314"/>
    <property type="project" value="UniProtKB"/>
</dbReference>
<dbReference type="GO" id="GO:0042438">
    <property type="term" value="P:melanin biosynthetic process"/>
    <property type="evidence" value="ECO:0000314"/>
    <property type="project" value="UniProtKB"/>
</dbReference>
<dbReference type="GO" id="GO:0030639">
    <property type="term" value="P:polyketide biosynthetic process"/>
    <property type="evidence" value="ECO:0000318"/>
    <property type="project" value="GO_Central"/>
</dbReference>
<dbReference type="CDD" id="cd00831">
    <property type="entry name" value="CHS_like"/>
    <property type="match status" value="1"/>
</dbReference>
<dbReference type="FunFam" id="3.40.47.10:FF:000014">
    <property type="entry name" value="Chalcone synthase 1"/>
    <property type="match status" value="1"/>
</dbReference>
<dbReference type="FunFam" id="3.40.47.10:FF:000040">
    <property type="entry name" value="Type III polyketide synthase"/>
    <property type="match status" value="1"/>
</dbReference>
<dbReference type="Gene3D" id="3.40.47.10">
    <property type="match status" value="2"/>
</dbReference>
<dbReference type="InterPro" id="IPR012328">
    <property type="entry name" value="Chalcone/stilbene_synt_C"/>
</dbReference>
<dbReference type="InterPro" id="IPR001099">
    <property type="entry name" value="Chalcone/stilbene_synt_N"/>
</dbReference>
<dbReference type="InterPro" id="IPR011141">
    <property type="entry name" value="Polyketide_synthase_type-III"/>
</dbReference>
<dbReference type="InterPro" id="IPR016039">
    <property type="entry name" value="Thiolase-like"/>
</dbReference>
<dbReference type="PANTHER" id="PTHR11877:SF99">
    <property type="entry name" value="1,3,6,8-TETRAHYDROXYNAPHTHALENE SYNTHASE"/>
    <property type="match status" value="1"/>
</dbReference>
<dbReference type="PANTHER" id="PTHR11877">
    <property type="entry name" value="HYDROXYMETHYLGLUTARYL-COA SYNTHASE"/>
    <property type="match status" value="1"/>
</dbReference>
<dbReference type="Pfam" id="PF02797">
    <property type="entry name" value="Chal_sti_synt_C"/>
    <property type="match status" value="1"/>
</dbReference>
<dbReference type="Pfam" id="PF00195">
    <property type="entry name" value="Chal_sti_synt_N"/>
    <property type="match status" value="1"/>
</dbReference>
<dbReference type="PIRSF" id="PIRSF000451">
    <property type="entry name" value="PKS_III"/>
    <property type="match status" value="1"/>
</dbReference>
<dbReference type="SUPFAM" id="SSF53901">
    <property type="entry name" value="Thiolase-like"/>
    <property type="match status" value="2"/>
</dbReference>
<organism>
    <name type="scientific">Streptomyces coelicolor (strain ATCC BAA-471 / A3(2) / M145)</name>
    <dbReference type="NCBI Taxonomy" id="100226"/>
    <lineage>
        <taxon>Bacteria</taxon>
        <taxon>Bacillati</taxon>
        <taxon>Actinomycetota</taxon>
        <taxon>Actinomycetes</taxon>
        <taxon>Kitasatosporales</taxon>
        <taxon>Streptomycetaceae</taxon>
        <taxon>Streptomyces</taxon>
        <taxon>Streptomyces albidoflavus group</taxon>
    </lineage>
</organism>
<keyword id="KW-0002">3D-structure</keyword>
<keyword id="KW-0012">Acyltransferase</keyword>
<keyword id="KW-0470">Melanin biosynthesis</keyword>
<keyword id="KW-1185">Reference proteome</keyword>
<keyword id="KW-0808">Transferase</keyword>
<name>RPPA_STRCO</name>
<comment type="function">
    <text evidence="2 3">Involved in the biosynthesis of melanin but also various secondary metabolites containing a naphthoquinone ring. Catalyzes the iterative condensation of five CoA-linked malonyl units to form a pentaketide intermediate. THNS subsequently catalyzes the dual intramolecular Claisen and aldol condensations of this linear intermediate to produce the fused ring of 1,3,6,8-tetrahydroxynaphthalene (THN).</text>
</comment>
<comment type="catalytic activity">
    <reaction evidence="2 3">
        <text>5 malonyl-CoA + 5 H(+) = naphthalene-1,3,6,8-tetrol + 5 CO2 + 5 CoA + H2O</text>
        <dbReference type="Rhea" id="RHEA:41524"/>
        <dbReference type="ChEBI" id="CHEBI:15377"/>
        <dbReference type="ChEBI" id="CHEBI:15378"/>
        <dbReference type="ChEBI" id="CHEBI:16526"/>
        <dbReference type="ChEBI" id="CHEBI:18365"/>
        <dbReference type="ChEBI" id="CHEBI:57287"/>
        <dbReference type="ChEBI" id="CHEBI:57384"/>
        <dbReference type="EC" id="2.3.1.233"/>
    </reaction>
</comment>
<comment type="biophysicochemical properties">
    <kinetics>
        <KM evidence="2">3.58 uM for 5 malonyl-CoA</KM>
        <text evidence="2">kcat is 0.48 min(-1) for THN synthase activity with THN as substrate.</text>
    </kinetics>
</comment>
<comment type="pathway">
    <text evidence="1">Pigment biosynthesis; melanin biosynthesis.</text>
</comment>
<comment type="subunit">
    <text evidence="3">Homodimer.</text>
</comment>
<comment type="similarity">
    <text evidence="5">Belongs to the thiolase-like superfamily. Chalcone/stilbene synthases family.</text>
</comment>
<protein>
    <recommendedName>
        <fullName evidence="4">1,3,6,8-tetrahydroxynaphthalene synthase</fullName>
        <shortName evidence="4">THNS</shortName>
        <ecNumber evidence="2 3">2.3.1.233</ecNumber>
    </recommendedName>
    <alternativeName>
        <fullName evidence="5">1,3,6,8-tetrahydroxynaphthalene synthesis polyketide synthase type III</fullName>
    </alternativeName>
</protein>